<keyword id="KW-0249">Electron transport</keyword>
<keyword id="KW-0349">Heme</keyword>
<keyword id="KW-0408">Iron</keyword>
<keyword id="KW-0472">Membrane</keyword>
<keyword id="KW-0479">Metal-binding</keyword>
<keyword id="KW-0496">Mitochondrion</keyword>
<keyword id="KW-0999">Mitochondrion inner membrane</keyword>
<keyword id="KW-0679">Respiratory chain</keyword>
<keyword id="KW-0812">Transmembrane</keyword>
<keyword id="KW-1133">Transmembrane helix</keyword>
<keyword id="KW-0813">Transport</keyword>
<keyword id="KW-0830">Ubiquinone</keyword>
<protein>
    <recommendedName>
        <fullName>Cytochrome b</fullName>
    </recommendedName>
    <alternativeName>
        <fullName>Complex III subunit 3</fullName>
    </alternativeName>
    <alternativeName>
        <fullName>Complex III subunit III</fullName>
    </alternativeName>
    <alternativeName>
        <fullName>Cytochrome b-c1 complex subunit 3</fullName>
    </alternativeName>
    <alternativeName>
        <fullName>Ubiquinol-cytochrome-c reductase complex cytochrome b subunit</fullName>
    </alternativeName>
</protein>
<sequence length="379" mass="42692">MTNFRKTHPLMKILNNSFIDLPAPSNISSWWNFGSLLGLCLVIQILTGLFLAMHYTSDTMTAFSSVTHICRDVNYGWLIRYLHANGASMFFICLFLHVGRGLYYGSYLFLETWNIGVLLLFAVMATAFMGYVLPWGQMSFWGATVITNLLSAIPYIGSDLVEWIWGGFSVDKATLTRFFAFHFILPFIIAALAGVHLLFLHETGSNNPSGIPSDADKIPFHPYYTIKDILGVLLLILVLTSLVLFSPDLLGDPDNYTPANPLNTPPHIKPEWYFLFAYAILRSIPNKLGGVLALVLSILILALMPFLHTAKQRSMMFRPFSQCLFWILVADLITLTWIGGQPVEHPYVIIGQLASILYFLLILVLMPITSLLENNMLKW</sequence>
<comment type="function">
    <text evidence="2">Component of the ubiquinol-cytochrome c reductase complex (complex III or cytochrome b-c1 complex) that is part of the mitochondrial respiratory chain. The b-c1 complex mediates electron transfer from ubiquinol to cytochrome c. Contributes to the generation of a proton gradient across the mitochondrial membrane that is then used for ATP synthesis.</text>
</comment>
<comment type="cofactor">
    <cofactor evidence="2">
        <name>heme b</name>
        <dbReference type="ChEBI" id="CHEBI:60344"/>
    </cofactor>
    <text evidence="2">Binds 2 heme b groups non-covalently.</text>
</comment>
<comment type="subunit">
    <text evidence="2">The cytochrome bc1 complex contains 11 subunits: 3 respiratory subunits (MT-CYB, CYC1 and UQCRFS1), 2 core proteins (UQCRC1 and UQCRC2) and 6 low-molecular weight proteins (UQCRH/QCR6, UQCRB/QCR7, UQCRQ/QCR8, UQCR10/QCR9, UQCR11/QCR10 and a cleavage product of UQCRFS1). This cytochrome bc1 complex then forms a dimer.</text>
</comment>
<comment type="subcellular location">
    <subcellularLocation>
        <location evidence="2">Mitochondrion inner membrane</location>
        <topology evidence="2">Multi-pass membrane protein</topology>
    </subcellularLocation>
</comment>
<comment type="miscellaneous">
    <text evidence="1">Heme 1 (or BL or b562) is low-potential and absorbs at about 562 nm, and heme 2 (or BH or b566) is high-potential and absorbs at about 566 nm.</text>
</comment>
<comment type="similarity">
    <text evidence="3 4">Belongs to the cytochrome b family.</text>
</comment>
<comment type="caution">
    <text evidence="2">The full-length protein contains only eight transmembrane helices, not nine as predicted by bioinformatics tools.</text>
</comment>
<feature type="chain" id="PRO_0000061269" description="Cytochrome b">
    <location>
        <begin position="1"/>
        <end position="379"/>
    </location>
</feature>
<feature type="transmembrane region" description="Helical" evidence="2">
    <location>
        <begin position="33"/>
        <end position="53"/>
    </location>
</feature>
<feature type="transmembrane region" description="Helical" evidence="2">
    <location>
        <begin position="77"/>
        <end position="98"/>
    </location>
</feature>
<feature type="transmembrane region" description="Helical" evidence="2">
    <location>
        <begin position="113"/>
        <end position="133"/>
    </location>
</feature>
<feature type="transmembrane region" description="Helical" evidence="2">
    <location>
        <begin position="178"/>
        <end position="198"/>
    </location>
</feature>
<feature type="transmembrane region" description="Helical" evidence="2">
    <location>
        <begin position="226"/>
        <end position="246"/>
    </location>
</feature>
<feature type="transmembrane region" description="Helical" evidence="2">
    <location>
        <begin position="288"/>
        <end position="308"/>
    </location>
</feature>
<feature type="transmembrane region" description="Helical" evidence="2">
    <location>
        <begin position="320"/>
        <end position="340"/>
    </location>
</feature>
<feature type="transmembrane region" description="Helical" evidence="2">
    <location>
        <begin position="347"/>
        <end position="367"/>
    </location>
</feature>
<feature type="binding site" description="axial binding residue" evidence="2">
    <location>
        <position position="83"/>
    </location>
    <ligand>
        <name>heme b</name>
        <dbReference type="ChEBI" id="CHEBI:60344"/>
        <label>b562</label>
    </ligand>
    <ligandPart>
        <name>Fe</name>
        <dbReference type="ChEBI" id="CHEBI:18248"/>
    </ligandPart>
</feature>
<feature type="binding site" description="axial binding residue" evidence="2">
    <location>
        <position position="97"/>
    </location>
    <ligand>
        <name>heme b</name>
        <dbReference type="ChEBI" id="CHEBI:60344"/>
        <label>b566</label>
    </ligand>
    <ligandPart>
        <name>Fe</name>
        <dbReference type="ChEBI" id="CHEBI:18248"/>
    </ligandPart>
</feature>
<feature type="binding site" description="axial binding residue" evidence="2">
    <location>
        <position position="182"/>
    </location>
    <ligand>
        <name>heme b</name>
        <dbReference type="ChEBI" id="CHEBI:60344"/>
        <label>b562</label>
    </ligand>
    <ligandPart>
        <name>Fe</name>
        <dbReference type="ChEBI" id="CHEBI:18248"/>
    </ligandPart>
</feature>
<feature type="binding site" description="axial binding residue" evidence="2">
    <location>
        <position position="196"/>
    </location>
    <ligand>
        <name>heme b</name>
        <dbReference type="ChEBI" id="CHEBI:60344"/>
        <label>b566</label>
    </ligand>
    <ligandPart>
        <name>Fe</name>
        <dbReference type="ChEBI" id="CHEBI:18248"/>
    </ligandPart>
</feature>
<feature type="binding site" evidence="2">
    <location>
        <position position="201"/>
    </location>
    <ligand>
        <name>a ubiquinone</name>
        <dbReference type="ChEBI" id="CHEBI:16389"/>
    </ligand>
</feature>
<evidence type="ECO:0000250" key="1"/>
<evidence type="ECO:0000250" key="2">
    <source>
        <dbReference type="UniProtKB" id="P00157"/>
    </source>
</evidence>
<evidence type="ECO:0000255" key="3">
    <source>
        <dbReference type="PROSITE-ProRule" id="PRU00967"/>
    </source>
</evidence>
<evidence type="ECO:0000255" key="4">
    <source>
        <dbReference type="PROSITE-ProRule" id="PRU00968"/>
    </source>
</evidence>
<reference key="1">
    <citation type="submission" date="2004-03" db="EMBL/GenBank/DDBJ databases">
        <title>Mitochondrial cytochrome b sequence of Neomys fodiens from Xinjiang, China.</title>
        <authorList>
            <person name="Ohdachi S.D."/>
            <person name="Pogel P."/>
            <person name="Ablimit A."/>
        </authorList>
    </citation>
    <scope>NUCLEOTIDE SEQUENCE [GENOMIC DNA]</scope>
    <source>
        <tissue>Liver</tissue>
    </source>
</reference>
<reference key="2">
    <citation type="journal article" date="1997" name="Zool. Sci.">
        <title>Molecular phylogeny from nucleotide sequences of the mitochondrial cytochrome b gene and evolutionary history of Eurasian soricine shrews (Mammalia, Insectivora).</title>
        <authorList>
            <person name="Ohdachi S."/>
            <person name="Masuda R."/>
            <person name="Abe H."/>
            <person name="Adachi J."/>
            <person name="Dokuchaev N.E."/>
            <person name="Haukisalmi V."/>
            <person name="Yoshida M.C."/>
        </authorList>
    </citation>
    <scope>NUCLEOTIDE SEQUENCE [GENOMIC DNA] OF 1-134</scope>
    <source>
        <strain>Isolate #587 / Finland</strain>
        <tissue>Liver</tissue>
    </source>
</reference>
<proteinExistence type="inferred from homology"/>
<name>CYB_NEOFO</name>
<gene>
    <name type="primary">MT-CYB</name>
    <name type="synonym">COB</name>
    <name type="synonym">CYTB</name>
    <name type="synonym">MTCYB</name>
</gene>
<accession>O21366</accession>
<accession>Q60GT8</accession>
<organism>
    <name type="scientific">Neomys fodiens</name>
    <name type="common">European water shrew</name>
    <name type="synonym">Northern water shrew</name>
    <dbReference type="NCBI Taxonomy" id="62282"/>
    <lineage>
        <taxon>Eukaryota</taxon>
        <taxon>Metazoa</taxon>
        <taxon>Chordata</taxon>
        <taxon>Craniata</taxon>
        <taxon>Vertebrata</taxon>
        <taxon>Euteleostomi</taxon>
        <taxon>Mammalia</taxon>
        <taxon>Eutheria</taxon>
        <taxon>Laurasiatheria</taxon>
        <taxon>Eulipotyphla</taxon>
        <taxon>Soricidae</taxon>
        <taxon>Soricinae</taxon>
        <taxon>Neomys</taxon>
    </lineage>
</organism>
<geneLocation type="mitochondrion"/>
<dbReference type="EMBL" id="AB175071">
    <property type="protein sequence ID" value="BAD51814.1"/>
    <property type="molecule type" value="Genomic_DNA"/>
</dbReference>
<dbReference type="EMBL" id="D85362">
    <property type="protein sequence ID" value="BAA21355.1"/>
    <property type="molecule type" value="Genomic_DNA"/>
</dbReference>
<dbReference type="SMR" id="O21366"/>
<dbReference type="GO" id="GO:0005743">
    <property type="term" value="C:mitochondrial inner membrane"/>
    <property type="evidence" value="ECO:0007669"/>
    <property type="project" value="UniProtKB-SubCell"/>
</dbReference>
<dbReference type="GO" id="GO:0045275">
    <property type="term" value="C:respiratory chain complex III"/>
    <property type="evidence" value="ECO:0007669"/>
    <property type="project" value="InterPro"/>
</dbReference>
<dbReference type="GO" id="GO:0046872">
    <property type="term" value="F:metal ion binding"/>
    <property type="evidence" value="ECO:0007669"/>
    <property type="project" value="UniProtKB-KW"/>
</dbReference>
<dbReference type="GO" id="GO:0008121">
    <property type="term" value="F:ubiquinol-cytochrome-c reductase activity"/>
    <property type="evidence" value="ECO:0007669"/>
    <property type="project" value="InterPro"/>
</dbReference>
<dbReference type="GO" id="GO:0006122">
    <property type="term" value="P:mitochondrial electron transport, ubiquinol to cytochrome c"/>
    <property type="evidence" value="ECO:0007669"/>
    <property type="project" value="TreeGrafter"/>
</dbReference>
<dbReference type="CDD" id="cd00290">
    <property type="entry name" value="cytochrome_b_C"/>
    <property type="match status" value="1"/>
</dbReference>
<dbReference type="CDD" id="cd00284">
    <property type="entry name" value="Cytochrome_b_N"/>
    <property type="match status" value="1"/>
</dbReference>
<dbReference type="FunFam" id="1.20.810.10:FF:000002">
    <property type="entry name" value="Cytochrome b"/>
    <property type="match status" value="1"/>
</dbReference>
<dbReference type="Gene3D" id="1.20.810.10">
    <property type="entry name" value="Cytochrome Bc1 Complex, Chain C"/>
    <property type="match status" value="1"/>
</dbReference>
<dbReference type="InterPro" id="IPR005798">
    <property type="entry name" value="Cyt_b/b6_C"/>
</dbReference>
<dbReference type="InterPro" id="IPR036150">
    <property type="entry name" value="Cyt_b/b6_C_sf"/>
</dbReference>
<dbReference type="InterPro" id="IPR005797">
    <property type="entry name" value="Cyt_b/b6_N"/>
</dbReference>
<dbReference type="InterPro" id="IPR027387">
    <property type="entry name" value="Cytb/b6-like_sf"/>
</dbReference>
<dbReference type="InterPro" id="IPR030689">
    <property type="entry name" value="Cytochrome_b"/>
</dbReference>
<dbReference type="InterPro" id="IPR048260">
    <property type="entry name" value="Cytochrome_b_C_euk/bac"/>
</dbReference>
<dbReference type="InterPro" id="IPR048259">
    <property type="entry name" value="Cytochrome_b_N_euk/bac"/>
</dbReference>
<dbReference type="InterPro" id="IPR016174">
    <property type="entry name" value="Di-haem_cyt_TM"/>
</dbReference>
<dbReference type="PANTHER" id="PTHR19271">
    <property type="entry name" value="CYTOCHROME B"/>
    <property type="match status" value="1"/>
</dbReference>
<dbReference type="PANTHER" id="PTHR19271:SF16">
    <property type="entry name" value="CYTOCHROME B"/>
    <property type="match status" value="1"/>
</dbReference>
<dbReference type="Pfam" id="PF00032">
    <property type="entry name" value="Cytochrom_B_C"/>
    <property type="match status" value="1"/>
</dbReference>
<dbReference type="Pfam" id="PF00033">
    <property type="entry name" value="Cytochrome_B"/>
    <property type="match status" value="1"/>
</dbReference>
<dbReference type="PIRSF" id="PIRSF038885">
    <property type="entry name" value="COB"/>
    <property type="match status" value="1"/>
</dbReference>
<dbReference type="SUPFAM" id="SSF81648">
    <property type="entry name" value="a domain/subunit of cytochrome bc1 complex (Ubiquinol-cytochrome c reductase)"/>
    <property type="match status" value="1"/>
</dbReference>
<dbReference type="SUPFAM" id="SSF81342">
    <property type="entry name" value="Transmembrane di-heme cytochromes"/>
    <property type="match status" value="1"/>
</dbReference>
<dbReference type="PROSITE" id="PS51003">
    <property type="entry name" value="CYTB_CTER"/>
    <property type="match status" value="1"/>
</dbReference>
<dbReference type="PROSITE" id="PS51002">
    <property type="entry name" value="CYTB_NTER"/>
    <property type="match status" value="1"/>
</dbReference>